<reference key="1">
    <citation type="submission" date="2007-12" db="EMBL/GenBank/DDBJ databases">
        <title>Complete sequence of chromosome of Francisella philomiragia subsp. philomiragia ATCC 25017.</title>
        <authorList>
            <consortium name="US DOE Joint Genome Institute"/>
            <person name="Copeland A."/>
            <person name="Lucas S."/>
            <person name="Lapidus A."/>
            <person name="Barry K."/>
            <person name="Detter J.C."/>
            <person name="Glavina del Rio T."/>
            <person name="Hammon N."/>
            <person name="Israni S."/>
            <person name="Dalin E."/>
            <person name="Tice H."/>
            <person name="Pitluck S."/>
            <person name="Chain P."/>
            <person name="Malfatti S."/>
            <person name="Shin M."/>
            <person name="Vergez L."/>
            <person name="Schmutz J."/>
            <person name="Larimer F."/>
            <person name="Land M."/>
            <person name="Hauser L."/>
            <person name="Richardson P."/>
        </authorList>
    </citation>
    <scope>NUCLEOTIDE SEQUENCE [LARGE SCALE GENOMIC DNA]</scope>
    <source>
        <strain>ATCC 25017 / CCUG 19701 / FSC 153 / O#319-036</strain>
    </source>
</reference>
<sequence length="813" mass="93274">MSEYNFTQIEQQAQEYWRENNSFKAVEDKNKEKFYCLSMLPYPSGTLHMGHVRNYTIGDVIARYQKMQGKNVLHPMGWDAFGLPAENAAIKHKKSPYEWTKSNIAYMRSQLDSLGFSFDWSREVATCDESYYKWEQWFFIQLYKKGLAYRKNSVVNWDPVDQTVLANEQVVDGRGWRSGALIEKKEIPQWFLKITDYADELLKDINQLDGWPEAVKTMQTNWIGKSKGLTVKFKIQNSDKEIEVFTTRPDTLMGVSYLGIAPEHPLALEEAKTNSQLKSFIDECKRISTMEADLATQEKKGFKTSIQAIHPISGETVNVWVANFVLMGYGSGAVMSVPAHDQRDWEFAQKYNIALKQVIKPSDNKSKLDLDKEAFTEKGILINSGEFDGLNFKSAYQAIKKYLFDNDKGYETTNFRIHDWGISRQRYWGCPIPMIHCNDCGLVPEKEENLPVKLPTNVTLTEAGSPLKDIPEFLNVACPNCGKPATRETDTFDTFFESSWYYARYTCPTADKMLSEEANYWLPVDKYIGGIEHAIMHLLYARFFHKLMRDQGLVTSDEPFKNLLTQGMVLKDGAKMSKSKGNTVDPQELIDKYGADTVRLFSMFAAPPEQSLEWSDTGVDGANKFLRKVYNYAYTNKEILAKNITIDVTKLSKNDKKARYEIYANLKQAIFDFDKSQFNTVVSACMKILNTLNNYDNLSDSVKLEGFSILLRILSPFTPHICHYLWQEIGLGEDILHTQFPTVDDIALEKDEFLLVVQINGKVKVKLELDASLTKEQVEQEVLSDEQIKTFIKDKQIVKVIYVPQKLINIVVK</sequence>
<keyword id="KW-0030">Aminoacyl-tRNA synthetase</keyword>
<keyword id="KW-0067">ATP-binding</keyword>
<keyword id="KW-0963">Cytoplasm</keyword>
<keyword id="KW-0436">Ligase</keyword>
<keyword id="KW-0547">Nucleotide-binding</keyword>
<keyword id="KW-0648">Protein biosynthesis</keyword>
<accession>B0U0E8</accession>
<evidence type="ECO:0000255" key="1">
    <source>
        <dbReference type="HAMAP-Rule" id="MF_00049"/>
    </source>
</evidence>
<dbReference type="EC" id="6.1.1.4" evidence="1"/>
<dbReference type="EMBL" id="CP000937">
    <property type="protein sequence ID" value="ABZ87978.1"/>
    <property type="molecule type" value="Genomic_DNA"/>
</dbReference>
<dbReference type="SMR" id="B0U0E8"/>
<dbReference type="KEGG" id="fph:Fphi_1752"/>
<dbReference type="eggNOG" id="COG0495">
    <property type="taxonomic scope" value="Bacteria"/>
</dbReference>
<dbReference type="HOGENOM" id="CLU_004427_0_0_6"/>
<dbReference type="GO" id="GO:0005829">
    <property type="term" value="C:cytosol"/>
    <property type="evidence" value="ECO:0007669"/>
    <property type="project" value="TreeGrafter"/>
</dbReference>
<dbReference type="GO" id="GO:0002161">
    <property type="term" value="F:aminoacyl-tRNA deacylase activity"/>
    <property type="evidence" value="ECO:0007669"/>
    <property type="project" value="InterPro"/>
</dbReference>
<dbReference type="GO" id="GO:0005524">
    <property type="term" value="F:ATP binding"/>
    <property type="evidence" value="ECO:0007669"/>
    <property type="project" value="UniProtKB-UniRule"/>
</dbReference>
<dbReference type="GO" id="GO:0004823">
    <property type="term" value="F:leucine-tRNA ligase activity"/>
    <property type="evidence" value="ECO:0007669"/>
    <property type="project" value="UniProtKB-UniRule"/>
</dbReference>
<dbReference type="GO" id="GO:0006429">
    <property type="term" value="P:leucyl-tRNA aminoacylation"/>
    <property type="evidence" value="ECO:0007669"/>
    <property type="project" value="UniProtKB-UniRule"/>
</dbReference>
<dbReference type="CDD" id="cd07958">
    <property type="entry name" value="Anticodon_Ia_Leu_BEm"/>
    <property type="match status" value="1"/>
</dbReference>
<dbReference type="CDD" id="cd00812">
    <property type="entry name" value="LeuRS_core"/>
    <property type="match status" value="1"/>
</dbReference>
<dbReference type="FunFam" id="1.10.730.10:FF:000002">
    <property type="entry name" value="Leucine--tRNA ligase"/>
    <property type="match status" value="1"/>
</dbReference>
<dbReference type="FunFam" id="3.40.50.620:FF:000395">
    <property type="entry name" value="Leucine--tRNA ligase"/>
    <property type="match status" value="1"/>
</dbReference>
<dbReference type="FunFam" id="3.90.740.10:FF:000012">
    <property type="entry name" value="Leucine--tRNA ligase"/>
    <property type="match status" value="1"/>
</dbReference>
<dbReference type="Gene3D" id="3.10.20.590">
    <property type="match status" value="1"/>
</dbReference>
<dbReference type="Gene3D" id="3.40.50.620">
    <property type="entry name" value="HUPs"/>
    <property type="match status" value="2"/>
</dbReference>
<dbReference type="Gene3D" id="1.10.730.10">
    <property type="entry name" value="Isoleucyl-tRNA Synthetase, Domain 1"/>
    <property type="match status" value="1"/>
</dbReference>
<dbReference type="Gene3D" id="3.90.740.10">
    <property type="entry name" value="Valyl/Leucyl/Isoleucyl-tRNA synthetase, editing domain"/>
    <property type="match status" value="1"/>
</dbReference>
<dbReference type="HAMAP" id="MF_00049_B">
    <property type="entry name" value="Leu_tRNA_synth_B"/>
    <property type="match status" value="1"/>
</dbReference>
<dbReference type="InterPro" id="IPR001412">
    <property type="entry name" value="aa-tRNA-synth_I_CS"/>
</dbReference>
<dbReference type="InterPro" id="IPR002300">
    <property type="entry name" value="aa-tRNA-synth_Ia"/>
</dbReference>
<dbReference type="InterPro" id="IPR002302">
    <property type="entry name" value="Leu-tRNA-ligase"/>
</dbReference>
<dbReference type="InterPro" id="IPR025709">
    <property type="entry name" value="Leu_tRNA-synth_edit"/>
</dbReference>
<dbReference type="InterPro" id="IPR013155">
    <property type="entry name" value="M/V/L/I-tRNA-synth_anticd-bd"/>
</dbReference>
<dbReference type="InterPro" id="IPR015413">
    <property type="entry name" value="Methionyl/Leucyl_tRNA_Synth"/>
</dbReference>
<dbReference type="InterPro" id="IPR014729">
    <property type="entry name" value="Rossmann-like_a/b/a_fold"/>
</dbReference>
<dbReference type="InterPro" id="IPR009080">
    <property type="entry name" value="tRNAsynth_Ia_anticodon-bd"/>
</dbReference>
<dbReference type="InterPro" id="IPR009008">
    <property type="entry name" value="Val/Leu/Ile-tRNA-synth_edit"/>
</dbReference>
<dbReference type="NCBIfam" id="TIGR00396">
    <property type="entry name" value="leuS_bact"/>
    <property type="match status" value="1"/>
</dbReference>
<dbReference type="PANTHER" id="PTHR43740:SF2">
    <property type="entry name" value="LEUCINE--TRNA LIGASE, MITOCHONDRIAL"/>
    <property type="match status" value="1"/>
</dbReference>
<dbReference type="PANTHER" id="PTHR43740">
    <property type="entry name" value="LEUCYL-TRNA SYNTHETASE"/>
    <property type="match status" value="1"/>
</dbReference>
<dbReference type="Pfam" id="PF08264">
    <property type="entry name" value="Anticodon_1"/>
    <property type="match status" value="1"/>
</dbReference>
<dbReference type="Pfam" id="PF00133">
    <property type="entry name" value="tRNA-synt_1"/>
    <property type="match status" value="1"/>
</dbReference>
<dbReference type="Pfam" id="PF13603">
    <property type="entry name" value="tRNA-synt_1_2"/>
    <property type="match status" value="1"/>
</dbReference>
<dbReference type="Pfam" id="PF09334">
    <property type="entry name" value="tRNA-synt_1g"/>
    <property type="match status" value="1"/>
</dbReference>
<dbReference type="PRINTS" id="PR00985">
    <property type="entry name" value="TRNASYNTHLEU"/>
</dbReference>
<dbReference type="SUPFAM" id="SSF47323">
    <property type="entry name" value="Anticodon-binding domain of a subclass of class I aminoacyl-tRNA synthetases"/>
    <property type="match status" value="1"/>
</dbReference>
<dbReference type="SUPFAM" id="SSF52374">
    <property type="entry name" value="Nucleotidylyl transferase"/>
    <property type="match status" value="1"/>
</dbReference>
<dbReference type="SUPFAM" id="SSF50677">
    <property type="entry name" value="ValRS/IleRS/LeuRS editing domain"/>
    <property type="match status" value="1"/>
</dbReference>
<dbReference type="PROSITE" id="PS00178">
    <property type="entry name" value="AA_TRNA_LIGASE_I"/>
    <property type="match status" value="1"/>
</dbReference>
<name>SYL_FRAP2</name>
<proteinExistence type="inferred from homology"/>
<comment type="catalytic activity">
    <reaction evidence="1">
        <text>tRNA(Leu) + L-leucine + ATP = L-leucyl-tRNA(Leu) + AMP + diphosphate</text>
        <dbReference type="Rhea" id="RHEA:11688"/>
        <dbReference type="Rhea" id="RHEA-COMP:9613"/>
        <dbReference type="Rhea" id="RHEA-COMP:9622"/>
        <dbReference type="ChEBI" id="CHEBI:30616"/>
        <dbReference type="ChEBI" id="CHEBI:33019"/>
        <dbReference type="ChEBI" id="CHEBI:57427"/>
        <dbReference type="ChEBI" id="CHEBI:78442"/>
        <dbReference type="ChEBI" id="CHEBI:78494"/>
        <dbReference type="ChEBI" id="CHEBI:456215"/>
        <dbReference type="EC" id="6.1.1.4"/>
    </reaction>
</comment>
<comment type="subcellular location">
    <subcellularLocation>
        <location evidence="1">Cytoplasm</location>
    </subcellularLocation>
</comment>
<comment type="similarity">
    <text evidence="1">Belongs to the class-I aminoacyl-tRNA synthetase family.</text>
</comment>
<feature type="chain" id="PRO_1000074834" description="Leucine--tRNA ligase">
    <location>
        <begin position="1"/>
        <end position="813"/>
    </location>
</feature>
<feature type="short sequence motif" description="'HIGH' region">
    <location>
        <begin position="41"/>
        <end position="51"/>
    </location>
</feature>
<feature type="short sequence motif" description="'KMSKS' region">
    <location>
        <begin position="575"/>
        <end position="579"/>
    </location>
</feature>
<feature type="binding site" evidence="1">
    <location>
        <position position="578"/>
    </location>
    <ligand>
        <name>ATP</name>
        <dbReference type="ChEBI" id="CHEBI:30616"/>
    </ligand>
</feature>
<gene>
    <name evidence="1" type="primary">leuS</name>
    <name type="ordered locus">Fphi_1752</name>
</gene>
<organism>
    <name type="scientific">Francisella philomiragia subsp. philomiragia (strain ATCC 25017 / CCUG 19701 / FSC 153 / O#319-036)</name>
    <dbReference type="NCBI Taxonomy" id="484022"/>
    <lineage>
        <taxon>Bacteria</taxon>
        <taxon>Pseudomonadati</taxon>
        <taxon>Pseudomonadota</taxon>
        <taxon>Gammaproteobacteria</taxon>
        <taxon>Thiotrichales</taxon>
        <taxon>Francisellaceae</taxon>
        <taxon>Francisella</taxon>
    </lineage>
</organism>
<protein>
    <recommendedName>
        <fullName evidence="1">Leucine--tRNA ligase</fullName>
        <ecNumber evidence="1">6.1.1.4</ecNumber>
    </recommendedName>
    <alternativeName>
        <fullName evidence="1">Leucyl-tRNA synthetase</fullName>
        <shortName evidence="1">LeuRS</shortName>
    </alternativeName>
</protein>